<feature type="chain" id="PRO_0000166335" description="FMN-dependent NADH:quinone oxidoreductase 1">
    <location>
        <begin position="1"/>
        <end position="214"/>
    </location>
</feature>
<feature type="binding site" evidence="1">
    <location>
        <begin position="17"/>
        <end position="19"/>
    </location>
    <ligand>
        <name>FMN</name>
        <dbReference type="ChEBI" id="CHEBI:58210"/>
    </ligand>
</feature>
<feature type="binding site" evidence="1">
    <location>
        <begin position="144"/>
        <end position="147"/>
    </location>
    <ligand>
        <name>FMN</name>
        <dbReference type="ChEBI" id="CHEBI:58210"/>
    </ligand>
</feature>
<dbReference type="EC" id="1.6.5.-" evidence="1"/>
<dbReference type="EC" id="1.7.1.17" evidence="1"/>
<dbReference type="EMBL" id="AE005176">
    <property type="protein sequence ID" value="AAK04212.1"/>
    <property type="molecule type" value="Genomic_DNA"/>
</dbReference>
<dbReference type="PIR" id="B86639">
    <property type="entry name" value="B86639"/>
</dbReference>
<dbReference type="RefSeq" id="NP_266270.1">
    <property type="nucleotide sequence ID" value="NC_002662.1"/>
</dbReference>
<dbReference type="RefSeq" id="WP_010905126.1">
    <property type="nucleotide sequence ID" value="NC_002662.1"/>
</dbReference>
<dbReference type="SMR" id="Q9CJ86"/>
<dbReference type="PaxDb" id="272623-L115551"/>
<dbReference type="EnsemblBacteria" id="AAK04212">
    <property type="protein sequence ID" value="AAK04212"/>
    <property type="gene ID" value="L115551"/>
</dbReference>
<dbReference type="KEGG" id="lla:L115551"/>
<dbReference type="PATRIC" id="fig|272623.7.peg.128"/>
<dbReference type="eggNOG" id="COG1182">
    <property type="taxonomic scope" value="Bacteria"/>
</dbReference>
<dbReference type="HOGENOM" id="CLU_088964_3_1_9"/>
<dbReference type="OrthoDB" id="9805013at2"/>
<dbReference type="Proteomes" id="UP000002196">
    <property type="component" value="Chromosome"/>
</dbReference>
<dbReference type="GO" id="GO:0009055">
    <property type="term" value="F:electron transfer activity"/>
    <property type="evidence" value="ECO:0007669"/>
    <property type="project" value="UniProtKB-UniRule"/>
</dbReference>
<dbReference type="GO" id="GO:0010181">
    <property type="term" value="F:FMN binding"/>
    <property type="evidence" value="ECO:0007669"/>
    <property type="project" value="UniProtKB-UniRule"/>
</dbReference>
<dbReference type="GO" id="GO:0016652">
    <property type="term" value="F:oxidoreductase activity, acting on NAD(P)H as acceptor"/>
    <property type="evidence" value="ECO:0007669"/>
    <property type="project" value="UniProtKB-UniRule"/>
</dbReference>
<dbReference type="GO" id="GO:0016655">
    <property type="term" value="F:oxidoreductase activity, acting on NAD(P)H, quinone or similar compound as acceptor"/>
    <property type="evidence" value="ECO:0007669"/>
    <property type="project" value="InterPro"/>
</dbReference>
<dbReference type="Gene3D" id="3.40.50.360">
    <property type="match status" value="1"/>
</dbReference>
<dbReference type="HAMAP" id="MF_01216">
    <property type="entry name" value="Azoreductase_type1"/>
    <property type="match status" value="1"/>
</dbReference>
<dbReference type="InterPro" id="IPR003680">
    <property type="entry name" value="Flavodoxin_fold"/>
</dbReference>
<dbReference type="InterPro" id="IPR029039">
    <property type="entry name" value="Flavoprotein-like_sf"/>
</dbReference>
<dbReference type="InterPro" id="IPR050104">
    <property type="entry name" value="FMN-dep_NADH:Q_OxRdtase_AzoR1"/>
</dbReference>
<dbReference type="InterPro" id="IPR023048">
    <property type="entry name" value="NADH:quinone_OxRdtase_FMN_depd"/>
</dbReference>
<dbReference type="PANTHER" id="PTHR43741">
    <property type="entry name" value="FMN-DEPENDENT NADH-AZOREDUCTASE 1"/>
    <property type="match status" value="1"/>
</dbReference>
<dbReference type="PANTHER" id="PTHR43741:SF7">
    <property type="entry name" value="FMN-DEPENDENT NADH:QUINONE OXIDOREDUCTASE"/>
    <property type="match status" value="1"/>
</dbReference>
<dbReference type="Pfam" id="PF02525">
    <property type="entry name" value="Flavodoxin_2"/>
    <property type="match status" value="1"/>
</dbReference>
<dbReference type="SUPFAM" id="SSF52218">
    <property type="entry name" value="Flavoproteins"/>
    <property type="match status" value="1"/>
</dbReference>
<evidence type="ECO:0000255" key="1">
    <source>
        <dbReference type="HAMAP-Rule" id="MF_01216"/>
    </source>
</evidence>
<comment type="function">
    <text evidence="1">Quinone reductase that provides resistance to thiol-specific stress caused by electrophilic quinones.</text>
</comment>
<comment type="function">
    <text evidence="1">Also exhibits azoreductase activity. Catalyzes the reductive cleavage of the azo bond in aromatic azo compounds to the corresponding amines.</text>
</comment>
<comment type="catalytic activity">
    <reaction evidence="1">
        <text>2 a quinone + NADH + H(+) = 2 a 1,4-benzosemiquinone + NAD(+)</text>
        <dbReference type="Rhea" id="RHEA:65952"/>
        <dbReference type="ChEBI" id="CHEBI:15378"/>
        <dbReference type="ChEBI" id="CHEBI:57540"/>
        <dbReference type="ChEBI" id="CHEBI:57945"/>
        <dbReference type="ChEBI" id="CHEBI:132124"/>
        <dbReference type="ChEBI" id="CHEBI:134225"/>
    </reaction>
</comment>
<comment type="catalytic activity">
    <reaction evidence="1">
        <text>N,N-dimethyl-1,4-phenylenediamine + anthranilate + 2 NAD(+) = 2-(4-dimethylaminophenyl)diazenylbenzoate + 2 NADH + 2 H(+)</text>
        <dbReference type="Rhea" id="RHEA:55872"/>
        <dbReference type="ChEBI" id="CHEBI:15378"/>
        <dbReference type="ChEBI" id="CHEBI:15783"/>
        <dbReference type="ChEBI" id="CHEBI:16567"/>
        <dbReference type="ChEBI" id="CHEBI:57540"/>
        <dbReference type="ChEBI" id="CHEBI:57945"/>
        <dbReference type="ChEBI" id="CHEBI:71579"/>
        <dbReference type="EC" id="1.7.1.17"/>
    </reaction>
</comment>
<comment type="cofactor">
    <cofactor evidence="1">
        <name>FMN</name>
        <dbReference type="ChEBI" id="CHEBI:58210"/>
    </cofactor>
    <text evidence="1">Binds 1 FMN per subunit.</text>
</comment>
<comment type="subunit">
    <text evidence="1">Homodimer.</text>
</comment>
<comment type="similarity">
    <text evidence="1">Belongs to the azoreductase type 1 family.</text>
</comment>
<proteinExistence type="inferred from homology"/>
<reference key="1">
    <citation type="journal article" date="2001" name="Genome Res.">
        <title>The complete genome sequence of the lactic acid bacterium Lactococcus lactis ssp. lactis IL1403.</title>
        <authorList>
            <person name="Bolotin A."/>
            <person name="Wincker P."/>
            <person name="Mauger S."/>
            <person name="Jaillon O."/>
            <person name="Malarme K."/>
            <person name="Weissenbach J."/>
            <person name="Ehrlich S.D."/>
            <person name="Sorokin A."/>
        </authorList>
    </citation>
    <scope>NUCLEOTIDE SEQUENCE [LARGE SCALE GENOMIC DNA]</scope>
    <source>
        <strain>IL1403</strain>
    </source>
</reference>
<sequence>MTTLLIILAHPHTDDFSWSLATVEEFKKSYQESHPLDKIIIRDLFSEKVPALDNETFAAWKRNKYAPDTLSAEDKNLLHRHEEYLEEFLSADKYVFVNPMYNGFVTAELKQYIDVIAVPRKLFRYTENGPIGLLEGKKSLHIQSAGGFYHNEQDPTHMANDLGAAYIDQTMKMVGLTDENRQQLFVEGYARYPERADELKEKAFTSAENFGKAF</sequence>
<keyword id="KW-0285">Flavoprotein</keyword>
<keyword id="KW-0288">FMN</keyword>
<keyword id="KW-0520">NAD</keyword>
<keyword id="KW-0560">Oxidoreductase</keyword>
<keyword id="KW-1185">Reference proteome</keyword>
<name>AZOR1_LACLA</name>
<protein>
    <recommendedName>
        <fullName evidence="1">FMN-dependent NADH:quinone oxidoreductase 1</fullName>
        <ecNumber evidence="1">1.6.5.-</ecNumber>
    </recommendedName>
    <alternativeName>
        <fullName evidence="1">Azo-dye reductase 1</fullName>
    </alternativeName>
    <alternativeName>
        <fullName evidence="1">FMN-dependent NADH-azo compound oxidoreductase 1</fullName>
    </alternativeName>
    <alternativeName>
        <fullName evidence="1">FMN-dependent NADH-azoreductase 1</fullName>
        <ecNumber evidence="1">1.7.1.17</ecNumber>
    </alternativeName>
</protein>
<gene>
    <name evidence="1" type="primary">azoR1</name>
    <name type="ordered locus">LL0114</name>
    <name type="ORF">L115551</name>
</gene>
<accession>Q9CJ86</accession>
<organism>
    <name type="scientific">Lactococcus lactis subsp. lactis (strain IL1403)</name>
    <name type="common">Streptococcus lactis</name>
    <dbReference type="NCBI Taxonomy" id="272623"/>
    <lineage>
        <taxon>Bacteria</taxon>
        <taxon>Bacillati</taxon>
        <taxon>Bacillota</taxon>
        <taxon>Bacilli</taxon>
        <taxon>Lactobacillales</taxon>
        <taxon>Streptococcaceae</taxon>
        <taxon>Lactococcus</taxon>
    </lineage>
</organism>